<accession>P23807</accession>
<accession>Q91247</accession>
<comment type="function">
    <text>When linked to subunit A of IX/X-bp, anticoagulant protein which binds to the gamma-carboxyglutamic acid-domain regions of factors IX (F9) and factor X (10) in the presence of calcium with a 1 to 1 stoichiometry.</text>
</comment>
<comment type="function">
    <text evidence="3 6 7 8">When linked to subunit A of IX-bp, anticoagulant protein which binds to the gamma-carboxyglutamic acid-domain regions of factor IX (but not to factor X) in the presence of calcium with a 1 to 1 stoichiometry.</text>
</comment>
<comment type="subunit">
    <text evidence="2 3 4 9">Heterodimer with subunit A of IX/X-bp or IX-bp; disulfide-linked.</text>
</comment>
<comment type="subcellular location">
    <subcellularLocation>
        <location>Secreted</location>
    </subcellularLocation>
</comment>
<comment type="tissue specificity">
    <text>Expressed by the venom gland.</text>
</comment>
<comment type="miscellaneous">
    <text>Calcium is required for ligand binding.</text>
</comment>
<comment type="similarity">
    <text evidence="10">Belongs to the snaclec family.</text>
</comment>
<protein>
    <recommendedName>
        <fullName>Snaclec coagulation factor IX/factor X-binding protein subunit B</fullName>
        <shortName>IX/X-bp subunit B</shortName>
    </recommendedName>
</protein>
<name>SL9B_PROFL</name>
<feature type="signal peptide" evidence="5">
    <location>
        <begin position="1"/>
        <end position="23"/>
    </location>
</feature>
<feature type="chain" id="PRO_0000017531" description="Snaclec coagulation factor IX/factor X-binding protein subunit B">
    <location>
        <begin position="24"/>
        <end position="146"/>
    </location>
</feature>
<feature type="domain" description="C-type lectin" evidence="1">
    <location>
        <begin position="24"/>
        <end position="146"/>
    </location>
</feature>
<feature type="binding site" evidence="2 3 4 9 11 12 13 14 15">
    <location>
        <position position="64"/>
    </location>
    <ligand>
        <name>Ca(2+)</name>
        <dbReference type="ChEBI" id="CHEBI:29108"/>
    </ligand>
</feature>
<feature type="binding site" evidence="2 3 4 9 11 12 13 14 15">
    <location>
        <position position="66"/>
    </location>
    <ligand>
        <name>Ca(2+)</name>
        <dbReference type="ChEBI" id="CHEBI:29108"/>
    </ligand>
</feature>
<feature type="binding site" evidence="2 3 4 9 11 12 13 14 15">
    <location>
        <position position="70"/>
    </location>
    <ligand>
        <name>Ca(2+)</name>
        <dbReference type="ChEBI" id="CHEBI:29108"/>
    </ligand>
</feature>
<feature type="binding site" evidence="2 3 4 9 11 12 13 14 15">
    <location>
        <position position="143"/>
    </location>
    <ligand>
        <name>Ca(2+)</name>
        <dbReference type="ChEBI" id="CHEBI:29108"/>
    </ligand>
</feature>
<feature type="disulfide bond" evidence="2 3 4 9 11 12 13 14 15 16">
    <location>
        <begin position="25"/>
        <end position="36"/>
    </location>
</feature>
<feature type="disulfide bond" evidence="2 3 4 9 11 12 13 14 15 16">
    <location>
        <begin position="53"/>
        <end position="142"/>
    </location>
</feature>
<feature type="disulfide bond" description="Interchain (with C-102 in subunit A of IX/X-bp or with C-79 in subunit A of IX-bp)" evidence="2 3 4 9">
    <location>
        <position position="98"/>
    </location>
</feature>
<feature type="disulfide bond" evidence="2 3 4 9 11 12 13 14 15 16">
    <location>
        <begin position="119"/>
        <end position="134"/>
    </location>
</feature>
<feature type="strand" evidence="18">
    <location>
        <begin position="29"/>
        <end position="32"/>
    </location>
</feature>
<feature type="strand" evidence="18">
    <location>
        <begin position="35"/>
        <end position="44"/>
    </location>
</feature>
<feature type="helix" evidence="18">
    <location>
        <begin position="46"/>
        <end position="56"/>
    </location>
</feature>
<feature type="helix" evidence="18">
    <location>
        <begin position="68"/>
        <end position="82"/>
    </location>
</feature>
<feature type="strand" evidence="18">
    <location>
        <begin position="86"/>
        <end position="88"/>
    </location>
</feature>
<feature type="turn" evidence="19">
    <location>
        <begin position="94"/>
        <end position="97"/>
    </location>
</feature>
<feature type="strand" evidence="18">
    <location>
        <begin position="100"/>
        <end position="102"/>
    </location>
</feature>
<feature type="strand" evidence="17">
    <location>
        <begin position="113"/>
        <end position="116"/>
    </location>
</feature>
<feature type="strand" evidence="18">
    <location>
        <begin position="118"/>
        <end position="123"/>
    </location>
</feature>
<feature type="strand" evidence="18">
    <location>
        <begin position="129"/>
        <end position="133"/>
    </location>
</feature>
<feature type="strand" evidence="18">
    <location>
        <begin position="138"/>
        <end position="145"/>
    </location>
</feature>
<proteinExistence type="evidence at protein level"/>
<dbReference type="EMBL" id="D83332">
    <property type="protein sequence ID" value="BAA11888.1"/>
    <property type="molecule type" value="mRNA"/>
</dbReference>
<dbReference type="PIR" id="JC4691">
    <property type="entry name" value="JC4691"/>
</dbReference>
<dbReference type="PDB" id="1BJ3">
    <property type="method" value="X-ray"/>
    <property type="resolution" value="2.60 A"/>
    <property type="chains" value="B=24-146"/>
</dbReference>
<dbReference type="PDB" id="1IXX">
    <property type="method" value="X-ray"/>
    <property type="resolution" value="2.50 A"/>
    <property type="chains" value="B/D/F=24-146"/>
</dbReference>
<dbReference type="PDB" id="1J34">
    <property type="method" value="X-ray"/>
    <property type="resolution" value="1.55 A"/>
    <property type="chains" value="B=24-146"/>
</dbReference>
<dbReference type="PDB" id="1J35">
    <property type="method" value="X-ray"/>
    <property type="resolution" value="1.80 A"/>
    <property type="chains" value="B=24-146"/>
</dbReference>
<dbReference type="PDB" id="1X2T">
    <property type="method" value="X-ray"/>
    <property type="resolution" value="1.72 A"/>
    <property type="chains" value="B/D=24-146"/>
</dbReference>
<dbReference type="PDB" id="1X2W">
    <property type="method" value="X-ray"/>
    <property type="resolution" value="2.29 A"/>
    <property type="chains" value="B=24-146"/>
</dbReference>
<dbReference type="PDBsum" id="1BJ3"/>
<dbReference type="PDBsum" id="1IXX"/>
<dbReference type="PDBsum" id="1J34"/>
<dbReference type="PDBsum" id="1J35"/>
<dbReference type="PDBsum" id="1X2T"/>
<dbReference type="PDBsum" id="1X2W"/>
<dbReference type="SMR" id="P23807"/>
<dbReference type="EvolutionaryTrace" id="P23807"/>
<dbReference type="GO" id="GO:0005576">
    <property type="term" value="C:extracellular region"/>
    <property type="evidence" value="ECO:0007669"/>
    <property type="project" value="UniProtKB-SubCell"/>
</dbReference>
<dbReference type="GO" id="GO:0005509">
    <property type="term" value="F:calcium ion binding"/>
    <property type="evidence" value="ECO:0000314"/>
    <property type="project" value="UniProtKB"/>
</dbReference>
<dbReference type="GO" id="GO:0090729">
    <property type="term" value="F:toxin activity"/>
    <property type="evidence" value="ECO:0007669"/>
    <property type="project" value="UniProtKB-KW"/>
</dbReference>
<dbReference type="FunFam" id="3.10.100.10:FF:000087">
    <property type="entry name" value="Snaclec rhodocetin subunit delta"/>
    <property type="match status" value="1"/>
</dbReference>
<dbReference type="Gene3D" id="3.10.100.10">
    <property type="entry name" value="Mannose-Binding Protein A, subunit A"/>
    <property type="match status" value="1"/>
</dbReference>
<dbReference type="InterPro" id="IPR001304">
    <property type="entry name" value="C-type_lectin-like"/>
</dbReference>
<dbReference type="InterPro" id="IPR016186">
    <property type="entry name" value="C-type_lectin-like/link_sf"/>
</dbReference>
<dbReference type="InterPro" id="IPR050111">
    <property type="entry name" value="C-type_lectin/snaclec_domain"/>
</dbReference>
<dbReference type="InterPro" id="IPR018378">
    <property type="entry name" value="C-type_lectin_CS"/>
</dbReference>
<dbReference type="InterPro" id="IPR016187">
    <property type="entry name" value="CTDL_fold"/>
</dbReference>
<dbReference type="PANTHER" id="PTHR22803">
    <property type="entry name" value="MANNOSE, PHOSPHOLIPASE, LECTIN RECEPTOR RELATED"/>
    <property type="match status" value="1"/>
</dbReference>
<dbReference type="Pfam" id="PF00059">
    <property type="entry name" value="Lectin_C"/>
    <property type="match status" value="1"/>
</dbReference>
<dbReference type="PRINTS" id="PR01504">
    <property type="entry name" value="PNCREATITSAP"/>
</dbReference>
<dbReference type="SMART" id="SM00034">
    <property type="entry name" value="CLECT"/>
    <property type="match status" value="1"/>
</dbReference>
<dbReference type="SUPFAM" id="SSF56436">
    <property type="entry name" value="C-type lectin-like"/>
    <property type="match status" value="1"/>
</dbReference>
<dbReference type="PROSITE" id="PS00615">
    <property type="entry name" value="C_TYPE_LECTIN_1"/>
    <property type="match status" value="1"/>
</dbReference>
<dbReference type="PROSITE" id="PS50041">
    <property type="entry name" value="C_TYPE_LECTIN_2"/>
    <property type="match status" value="1"/>
</dbReference>
<sequence>MGRFIFMSFGFLVVFLSLSGTAADCPSDWSSYEGHCYKPFSEPKNWADAENFCTQQHAGGHLVSFQSSEEADFVVKLAFQTFGHSIFWMGLSNVWNQCNWQWSNAAMLRYKAWAEESYCVYFKSTNNKWRSRACRMMAQFVCEFQA</sequence>
<organism>
    <name type="scientific">Protobothrops flavoviridis</name>
    <name type="common">Habu</name>
    <name type="synonym">Trimeresurus flavoviridis</name>
    <dbReference type="NCBI Taxonomy" id="88087"/>
    <lineage>
        <taxon>Eukaryota</taxon>
        <taxon>Metazoa</taxon>
        <taxon>Chordata</taxon>
        <taxon>Craniata</taxon>
        <taxon>Vertebrata</taxon>
        <taxon>Euteleostomi</taxon>
        <taxon>Lepidosauria</taxon>
        <taxon>Squamata</taxon>
        <taxon>Bifurcata</taxon>
        <taxon>Unidentata</taxon>
        <taxon>Episquamata</taxon>
        <taxon>Toxicofera</taxon>
        <taxon>Serpentes</taxon>
        <taxon>Colubroidea</taxon>
        <taxon>Viperidae</taxon>
        <taxon>Crotalinae</taxon>
        <taxon>Protobothrops</taxon>
    </lineage>
</organism>
<reference key="1">
    <citation type="journal article" date="1996" name="Biochem. Biophys. Res. Commun.">
        <title>cDNA cloning of IX/X-BP, a heterogeneous two-chain anticoagulant protein from snake venom.</title>
        <authorList>
            <person name="Matsuzaki R."/>
            <person name="Yoshihara E."/>
            <person name="Yamada M."/>
            <person name="Shima K."/>
            <person name="Atoda H."/>
            <person name="Morita T."/>
        </authorList>
    </citation>
    <scope>NUCLEOTIDE SEQUENCE [MRNA]</scope>
    <source>
        <tissue>Venom gland</tissue>
    </source>
</reference>
<reference key="2">
    <citation type="journal article" date="1991" name="J. Biol. Chem.">
        <title>The primary structure of coagulation factor IX/factor X-binding protein isolated from the venom of Trimeresurus flavoviridis. Homology with asialoglycoprotein receptors, proteoglycan core protein, tetranectin, and lymphocyte Fc epsilon receptor for immunoglobulin E.</title>
        <authorList>
            <person name="Atoda H."/>
            <person name="Hyuga M."/>
            <person name="Morita T."/>
        </authorList>
    </citation>
    <scope>PROTEIN SEQUENCE OF 24-146</scope>
    <source>
        <tissue>Venom</tissue>
    </source>
</reference>
<reference key="3">
    <citation type="journal article" date="1989" name="J. Biochem.">
        <title>A novel blood coagulation factor IX/factor X-binding protein with anticoagulant activity from the venom of Trimeresurus flavoviridis (Habu snake): isolation and characterization.</title>
        <authorList>
            <person name="Atoda H."/>
            <person name="Morita T."/>
        </authorList>
    </citation>
    <scope>FUNCTION</scope>
</reference>
<reference key="4">
    <citation type="journal article" date="1994" name="Eur. J. Biochem.">
        <title>Binding properties of the coagulation factor IX/factor X-binding protein isolated from the venom of Trimeresurus flavoviridis.</title>
        <authorList>
            <person name="Atoda H."/>
            <person name="Yoshida N."/>
            <person name="Ishikawa M."/>
            <person name="Morita T."/>
        </authorList>
    </citation>
    <scope>FUNCTION</scope>
</reference>
<reference key="5">
    <citation type="journal article" date="1995" name="J. Biochem.">
        <title>Blood coagulation factor IX-binding protein from the venom of Trimeresurus flavoviridis: purification and characterization.</title>
        <authorList>
            <person name="Atoda H."/>
            <person name="Ishikawa M."/>
            <person name="Yoshihara E."/>
            <person name="Sekiya F."/>
            <person name="Morita T."/>
        </authorList>
    </citation>
    <scope>FUNCTION</scope>
    <source>
        <tissue>Venom</tissue>
    </source>
</reference>
<reference key="6">
    <citation type="journal article" date="1997" name="Nat. Struct. Biol.">
        <title>Structure of coagulation factors IX/X-binding protein, a heterodimer of C-type lectin domains.</title>
        <authorList>
            <person name="Mizuno H."/>
            <person name="Fujimoto Z."/>
            <person name="Koizumi M."/>
            <person name="Kano H."/>
            <person name="Atoda H."/>
            <person name="Morita T."/>
        </authorList>
    </citation>
    <scope>X-RAY CRYSTALLOGRAPHY (2.5 ANGSTROMS) OF 24-146 IN DIMER WITH IX/X-BP</scope>
    <scope>METAL-BINDING SITES</scope>
    <scope>DISULFIDE BONDS</scope>
    <scope>SUBUNIT</scope>
</reference>
<reference key="7">
    <citation type="journal article" date="1999" name="J. Mol. Biol.">
        <title>Crystal structure of coagulation factor IX-binding protein from habu snake venom at 2.6 A: implication of central loop swapping based on deletion in the linker region.</title>
        <authorList>
            <person name="Mizuno H."/>
            <person name="Fujimoto Z."/>
            <person name="Koizumi M."/>
            <person name="Kano H."/>
            <person name="Atoda H."/>
            <person name="Morita T."/>
        </authorList>
    </citation>
    <scope>X-RAY CRYSTALLOGRAPHY (2.6 ANGSTROMS) OF 24-146 IN DIMER WITH IX-BP</scope>
    <scope>METAL-BINDING SITES</scope>
    <scope>DISULFIDE BONDS</scope>
    <scope>SUBUNIT</scope>
</reference>
<reference key="8">
    <citation type="journal article" date="2003" name="J. Biol. Chem.">
        <title>Crystal structure of Mg2+- and Ca2+-bound Gla domain of factor IX complexed with binding protein.</title>
        <authorList>
            <person name="Shikamoto Y."/>
            <person name="Morita T."/>
            <person name="Fujimoto Z."/>
            <person name="Mizuno H."/>
        </authorList>
    </citation>
    <scope>X-RAY CRYSTALLOGRAPHY (1.55 ANGSTROMS) OF 24-146 IN COMPLEX WITH IX-BPAND COAGULATION FACTOR IX</scope>
    <scope>METAL-BINDING SITES</scope>
    <scope>DISULFIDE BONDS</scope>
    <scope>SUBUNIT</scope>
</reference>
<reference key="9">
    <citation type="journal article" date="2005" name="J. Mol. Biol.">
        <title>pH-dependent structural changes at Ca(2+)-binding sites of coagulation factor IX-binding protein.</title>
        <authorList>
            <person name="Suzuki N."/>
            <person name="Fujimoto Z."/>
            <person name="Morita T."/>
            <person name="Fukamizu A."/>
            <person name="Mizuno H."/>
        </authorList>
    </citation>
    <scope>X-RAY CRYSTALLOGRAPHY (1.72 ANGSTROMS) OF 24-146 IN DIMER WITH IX-BP</scope>
    <scope>METAL-BINDING SITES</scope>
    <scope>DISULFIDE BONDS</scope>
</reference>
<keyword id="KW-0002">3D-structure</keyword>
<keyword id="KW-1203">Blood coagulation cascade inhibiting toxin</keyword>
<keyword id="KW-0106">Calcium</keyword>
<keyword id="KW-0903">Direct protein sequencing</keyword>
<keyword id="KW-1015">Disulfide bond</keyword>
<keyword id="KW-1199">Hemostasis impairing toxin</keyword>
<keyword id="KW-0479">Metal-binding</keyword>
<keyword id="KW-0964">Secreted</keyword>
<keyword id="KW-0732">Signal</keyword>
<keyword id="KW-0800">Toxin</keyword>
<evidence type="ECO:0000255" key="1">
    <source>
        <dbReference type="PROSITE-ProRule" id="PRU00040"/>
    </source>
</evidence>
<evidence type="ECO:0000269" key="2">
    <source>
    </source>
</evidence>
<evidence type="ECO:0000269" key="3">
    <source>
    </source>
</evidence>
<evidence type="ECO:0000269" key="4">
    <source>
    </source>
</evidence>
<evidence type="ECO:0000269" key="5">
    <source>
    </source>
</evidence>
<evidence type="ECO:0000269" key="6">
    <source>
    </source>
</evidence>
<evidence type="ECO:0000269" key="7">
    <source>
    </source>
</evidence>
<evidence type="ECO:0000269" key="8">
    <source>
    </source>
</evidence>
<evidence type="ECO:0000269" key="9">
    <source>
    </source>
</evidence>
<evidence type="ECO:0000305" key="10"/>
<evidence type="ECO:0007744" key="11">
    <source>
        <dbReference type="PDB" id="1BJ3"/>
    </source>
</evidence>
<evidence type="ECO:0007744" key="12">
    <source>
        <dbReference type="PDB" id="1IXX"/>
    </source>
</evidence>
<evidence type="ECO:0007744" key="13">
    <source>
        <dbReference type="PDB" id="1J34"/>
    </source>
</evidence>
<evidence type="ECO:0007744" key="14">
    <source>
        <dbReference type="PDB" id="1J35"/>
    </source>
</evidence>
<evidence type="ECO:0007744" key="15">
    <source>
        <dbReference type="PDB" id="1X2T"/>
    </source>
</evidence>
<evidence type="ECO:0007744" key="16">
    <source>
        <dbReference type="PDB" id="1X2W"/>
    </source>
</evidence>
<evidence type="ECO:0007829" key="17">
    <source>
        <dbReference type="PDB" id="1IXX"/>
    </source>
</evidence>
<evidence type="ECO:0007829" key="18">
    <source>
        <dbReference type="PDB" id="1J34"/>
    </source>
</evidence>
<evidence type="ECO:0007829" key="19">
    <source>
        <dbReference type="PDB" id="1X2T"/>
    </source>
</evidence>